<protein>
    <recommendedName>
        <fullName evidence="1">Maturase K</fullName>
    </recommendedName>
    <alternativeName>
        <fullName evidence="1">Intron maturase</fullName>
    </alternativeName>
</protein>
<reference key="1">
    <citation type="book" date="2003" name="Advances in legume systematics - part 10">
        <title>Phylogenetic analyses of tribes Trifolieae and Vicieae based on sequences of the plastid gene matK (Papilionoideae: Leguminosae).</title>
        <editorList>
            <person name="Klitgaard B.B."/>
            <person name="Bruneau A."/>
        </editorList>
        <authorList>
            <person name="Steele K.P."/>
            <person name="Wojciechowski M.F."/>
        </authorList>
    </citation>
    <scope>NUCLEOTIDE SEQUENCE [GENOMIC DNA]</scope>
</reference>
<accession>Q8MCR6</accession>
<evidence type="ECO:0000255" key="1">
    <source>
        <dbReference type="HAMAP-Rule" id="MF_01390"/>
    </source>
</evidence>
<gene>
    <name evidence="1" type="primary">matK</name>
</gene>
<dbReference type="EMBL" id="AF522089">
    <property type="protein sequence ID" value="AAM82081.1"/>
    <property type="molecule type" value="Genomic_DNA"/>
</dbReference>
<dbReference type="GO" id="GO:0009507">
    <property type="term" value="C:chloroplast"/>
    <property type="evidence" value="ECO:0007669"/>
    <property type="project" value="UniProtKB-SubCell"/>
</dbReference>
<dbReference type="GO" id="GO:0003723">
    <property type="term" value="F:RNA binding"/>
    <property type="evidence" value="ECO:0007669"/>
    <property type="project" value="UniProtKB-KW"/>
</dbReference>
<dbReference type="GO" id="GO:0006397">
    <property type="term" value="P:mRNA processing"/>
    <property type="evidence" value="ECO:0007669"/>
    <property type="project" value="UniProtKB-KW"/>
</dbReference>
<dbReference type="GO" id="GO:0008380">
    <property type="term" value="P:RNA splicing"/>
    <property type="evidence" value="ECO:0007669"/>
    <property type="project" value="UniProtKB-UniRule"/>
</dbReference>
<dbReference type="GO" id="GO:0008033">
    <property type="term" value="P:tRNA processing"/>
    <property type="evidence" value="ECO:0007669"/>
    <property type="project" value="UniProtKB-KW"/>
</dbReference>
<dbReference type="HAMAP" id="MF_01390">
    <property type="entry name" value="MatK"/>
    <property type="match status" value="1"/>
</dbReference>
<dbReference type="InterPro" id="IPR024937">
    <property type="entry name" value="Domain_X"/>
</dbReference>
<dbReference type="InterPro" id="IPR002866">
    <property type="entry name" value="Maturase_MatK"/>
</dbReference>
<dbReference type="InterPro" id="IPR024942">
    <property type="entry name" value="Maturase_MatK_N"/>
</dbReference>
<dbReference type="PANTHER" id="PTHR34811">
    <property type="entry name" value="MATURASE K"/>
    <property type="match status" value="1"/>
</dbReference>
<dbReference type="PANTHER" id="PTHR34811:SF1">
    <property type="entry name" value="MATURASE K"/>
    <property type="match status" value="1"/>
</dbReference>
<dbReference type="Pfam" id="PF01348">
    <property type="entry name" value="Intron_maturas2"/>
    <property type="match status" value="1"/>
</dbReference>
<dbReference type="Pfam" id="PF01824">
    <property type="entry name" value="MatK_N"/>
    <property type="match status" value="1"/>
</dbReference>
<proteinExistence type="inferred from homology"/>
<geneLocation type="chloroplast"/>
<keyword id="KW-0150">Chloroplast</keyword>
<keyword id="KW-0507">mRNA processing</keyword>
<keyword id="KW-0934">Plastid</keyword>
<keyword id="KW-0694">RNA-binding</keyword>
<keyword id="KW-0819">tRNA processing</keyword>
<feature type="chain" id="PRO_0000143469" description="Maturase K">
    <location>
        <begin position="1"/>
        <end position="507"/>
    </location>
</feature>
<comment type="function">
    <text evidence="1">Usually encoded in the trnK tRNA gene intron. Probably assists in splicing its own and other chloroplast group II introns.</text>
</comment>
<comment type="subcellular location">
    <subcellularLocation>
        <location>Plastid</location>
        <location>Chloroplast</location>
    </subcellularLocation>
</comment>
<comment type="similarity">
    <text evidence="1">Belongs to the intron maturase 2 family. MatK subfamily.</text>
</comment>
<sequence>MKESQVYLERARSRQQHFLYSLIFREYIYGLAYSHNLNRSLFVENVGYDNKYSLLIVKRLITRMYQQNHLIISANDSNKNSFWGYNNNYYSQIISEGFSIVVEIPFFLQLSSSLEEAEIIKYYKNFRSIHSIFPFLEDKFTYLNYVSDIRIPYPIHLEILVQILRYWVKDAPFFHLLRLFLCNWNSFITTKKKKSISTFSKINPRFFLFLYNFYVCEYESIFVFLRNQSSHLPLKSFRVFFERIFFYAKREHLVKLFAKDFLYTLTLTFFKDPNIHYVRYQGKCILASKNAPFLMDKWKHYFIHLWQCFFDVWSQPRTININPLSEHSFKLLGYFSNVRLNRSVVRSQMLQNTFLIEIVIKKIDIIVPILPLIRSLAKAKFCNVLGQPISKPVWADSSDFDIIDRFLRISRNLSHYYKGSSKKKSLYRIKYILRLSCIKTLACKHKSTVRAFLKRSGSEEFLQEFFTEEEEILSLIFPRDSSTLERLSRNRIWYLDILFSNDLVHDE</sequence>
<organism>
    <name type="scientific">Lens culinaris</name>
    <name type="common">Lentil</name>
    <name type="synonym">Cicer lens</name>
    <dbReference type="NCBI Taxonomy" id="3864"/>
    <lineage>
        <taxon>Eukaryota</taxon>
        <taxon>Viridiplantae</taxon>
        <taxon>Streptophyta</taxon>
        <taxon>Embryophyta</taxon>
        <taxon>Tracheophyta</taxon>
        <taxon>Spermatophyta</taxon>
        <taxon>Magnoliopsida</taxon>
        <taxon>eudicotyledons</taxon>
        <taxon>Gunneridae</taxon>
        <taxon>Pentapetalae</taxon>
        <taxon>rosids</taxon>
        <taxon>fabids</taxon>
        <taxon>Fabales</taxon>
        <taxon>Fabaceae</taxon>
        <taxon>Papilionoideae</taxon>
        <taxon>50 kb inversion clade</taxon>
        <taxon>NPAAA clade</taxon>
        <taxon>Hologalegina</taxon>
        <taxon>IRL clade</taxon>
        <taxon>Fabeae</taxon>
        <taxon>Lens</taxon>
    </lineage>
</organism>
<name>MATK_LENCU</name>